<proteinExistence type="inferred from homology"/>
<keyword id="KW-0067">ATP-binding</keyword>
<keyword id="KW-0150">Chloroplast</keyword>
<keyword id="KW-0547">Nucleotide-binding</keyword>
<keyword id="KW-0934">Plastid</keyword>
<organism>
    <name type="scientific">Silene latifolia</name>
    <name type="common">White campion</name>
    <name type="synonym">Bladder campion</name>
    <dbReference type="NCBI Taxonomy" id="37657"/>
    <lineage>
        <taxon>Eukaryota</taxon>
        <taxon>Viridiplantae</taxon>
        <taxon>Streptophyta</taxon>
        <taxon>Embryophyta</taxon>
        <taxon>Tracheophyta</taxon>
        <taxon>Spermatophyta</taxon>
        <taxon>Magnoliopsida</taxon>
        <taxon>eudicotyledons</taxon>
        <taxon>Gunneridae</taxon>
        <taxon>Pentapetalae</taxon>
        <taxon>Caryophyllales</taxon>
        <taxon>Caryophyllaceae</taxon>
        <taxon>Sileneae</taxon>
        <taxon>Silene</taxon>
        <taxon>Silene subgen. Behenantha</taxon>
        <taxon>Silene sect. Melandrium</taxon>
    </lineage>
</organism>
<name>YCF2_SILLA</name>
<comment type="function">
    <text>Probable ATPase of unknown function. Its presence in a non-photosynthetic plant (Epifagus virginiana) and experiments in tobacco indicate that it has an essential function which is probably not related to photosynthesis.</text>
</comment>
<comment type="subcellular location">
    <subcellularLocation>
        <location evidence="1">Plastid</location>
        <location evidence="1">Chloroplast stroma</location>
    </subcellularLocation>
</comment>
<comment type="similarity">
    <text evidence="1">Belongs to the Ycf2 family.</text>
</comment>
<sequence>MKGHQFKFWIFELREIKNSHYFSDSWTQFNSVGSFIHIFFHQERFIKLFDPRIWSILLSPNSRGSTSNRYFTIKGVILFVVVFLLYRINNRNMVERKNLYLIGLLPIPMNSIGPRNDTLEKPFWSSNINRLIVSLLYLPKGKNISASCFLDPKESTSTWFLPITKKCIMPESNRGSQWWRNWIGKKRDSSCKISNETVAGIEISFKEKDIKYLEFLFVYYMDDPISKDHDWELFDRLSLRRRRNIINLNSGQLFEILVKHWICYLMSAFREKRPIEVEGFFKQQGAGSTIQSNDIEHVSHLFSRNKWAISLQNCAQFHMWQFHQDLVVSWGKNPYESDLLRNVSRENWIWLDNVWLVNNFNKVRNVSSNSQYDSTRSSFVQVTDSSQLKGSSDQSRDRWDSISNADSEYHTLINKREIQQLKERSILRDPSFLQTEEIEELLENPTRSIRSFFSGRCSELHLGSNPTEKPTRDPKLLKKHLVVSFAPSRRSENKEMINIFKIITYLQNSVSIHPISPDPGCDMVPKDEPDMDSSDKISFLNKNSFFYLFNLFHDRNSGGYTLHHDFESEERFQEMADLFTLSITKPDLVYHKGFAFSIDSCGLDQKQFLNEVFNSRDESKKKSLLILPPIFYEENAFFYRRIQKKWVRISCGNYLEDRKQKRVVFASNNKMEAVNKNQYILIRNLIQIQYSTYGYIRNVLNRLFLMNRSDRSFEYGIKRDQIGNDTLNHRTIRKYTINQHLSNLKKSQKKRFDPLIFLSRTERFMNQDPDAYRYKWFNGSKNFQEHLVSEQRSRFQVVFGRLRINKYSIDWSEVIDKKDLSKSLRFFLSKSLLFLSKLLLFVSNSLPFFFVSFGNIPIHRSEIHISELKGPNDQLYNPLLESIGLQIVHLKKLKAFLLNDHDTFQKSKLLINGRTISPFLFNKIPKWMIDSFDTRNNHRNGKTDSYFSMISHDQNNWLNPVKPFHRSSLISSFYKANRLRFLNNPHHFCFYCNKRFPFYMEKARINNYDFTYRQFLDILFIRNKIFALCVGKKKHAFLERDTISPIESQVSNIFIPNDFTIRSDLFVRRTIDSITDISGTPLTEGQIVHFERTFYQPLSDMNLSDSERKNLHQYLNFNSNMGLIYTPCSDKYLPSEKRKKRSLCLKKCVEKGQMYRTFQRDSAFSTLSKWNLFQTYMPWFLTSTGYKYLNFLFFDTFSDLLPILSSSQKFVSIFHDIMHGSYISWRILQKKVCLPQWNLISEISNKCLHNLLLSEEMIHRNNESPLIWTHLGSPNVREFFYSILFLLLVAGYLVRTHLLFVFRASSELQTEFEEVKSLMTPSYMIELRKLLDRYPTSESNFFWLKNLFLVALEQLGDSLEEIWGSASGGNMPLGGGPAYGVKSIRSNKKDFNINLIDLISIIPNPINRITFSRNTRHLSHTSKEIYSLIRKRKRVNGDWIEDKIESWVASSDSIDEEEREFLVQLSTLTTEKRIDQILLSLTHSDRLLKNDSGYQMIEQPGAIYLRYLVDIHKKYLMNYEFNTSCLAERRVFLAHYQTITYSQTSCGANRFHFPSHGKPFSLRLALSLSRGILVIGSIGTGRSYLVKYLATNSYVPFITVFLNKFLDNKLKGFLIDASDDIDIDVSDDIDVSDDIDRDLDTELELLTMMNALTMDMMPEIGQFYITLQFELAKAMSPCIIWIPNIHDLDVNESNYLSLGLLVNYLSRDCERWSTRNILVIASTHIPQKVDPALIAPNKLNTCIKIRRLLIPQQRKHFFTLSYTRGFHLEKKMFHTNGFGSITMGSNVRDLVALNNEVLSISITQKKSIIDTNTIRSALHRQTWDFRSQVRSVQDHGIFFYQIGRAVAQNVLLSNCPIDPISIYMKKKSCNEGDSSLYKWYFELGTSMKKLTILLYLLSCSAGSVAQDLWSLPGPDGKKGITSYGLVENDSNLVHGLLKVEGALVGSSRTEKDCSQFDNDRVTLFLRPELRNPLDMMQNGSCSILDHRFLYEKDKSELEKGEGALDPQQIEEDLFNPIVWAPRIWTPWSFLFYCIERPNSLGFPYWAGSLRGKRIIYDEEDELQENDSEFLQSGTMQYQTRDRSSKEQGFFRISQFIWDPADPLFFLSKDQPFVSVFSHREFFADEEMPKGLLTTQKSTPTSIYKRWFIKNTQEKHFELLINRQRWLRTNSSLSNGSFRSNTLSESYQYLSNLFLSNGTLLDQMTKTLLRKRWLFPDEMKIGFM</sequence>
<feature type="chain" id="PRO_0000223069" description="Protein Ycf2">
    <location>
        <begin position="1"/>
        <end position="2223"/>
    </location>
</feature>
<feature type="binding site" evidence="1">
    <location>
        <begin position="1576"/>
        <end position="1583"/>
    </location>
    <ligand>
        <name>ATP</name>
        <dbReference type="ChEBI" id="CHEBI:30616"/>
    </ligand>
</feature>
<geneLocation type="chloroplast"/>
<evidence type="ECO:0000255" key="1">
    <source>
        <dbReference type="HAMAP-Rule" id="MF_01330"/>
    </source>
</evidence>
<gene>
    <name evidence="1" type="primary">ycf2</name>
</gene>
<dbReference type="EMBL" id="AB189069">
    <property type="protein sequence ID" value="BAD93471.1"/>
    <property type="molecule type" value="Genomic_DNA"/>
</dbReference>
<dbReference type="GO" id="GO:0009570">
    <property type="term" value="C:chloroplast stroma"/>
    <property type="evidence" value="ECO:0007669"/>
    <property type="project" value="UniProtKB-SubCell"/>
</dbReference>
<dbReference type="GO" id="GO:0005524">
    <property type="term" value="F:ATP binding"/>
    <property type="evidence" value="ECO:0007669"/>
    <property type="project" value="UniProtKB-KW"/>
</dbReference>
<dbReference type="GO" id="GO:0016887">
    <property type="term" value="F:ATP hydrolysis activity"/>
    <property type="evidence" value="ECO:0007669"/>
    <property type="project" value="InterPro"/>
</dbReference>
<dbReference type="CDD" id="cd19505">
    <property type="entry name" value="RecA-like_Ycf2"/>
    <property type="match status" value="1"/>
</dbReference>
<dbReference type="Gene3D" id="3.40.50.300">
    <property type="entry name" value="P-loop containing nucleotide triphosphate hydrolases"/>
    <property type="match status" value="1"/>
</dbReference>
<dbReference type="HAMAP" id="MF_01330">
    <property type="entry name" value="Ycf2"/>
    <property type="match status" value="1"/>
</dbReference>
<dbReference type="InterPro" id="IPR003593">
    <property type="entry name" value="AAA+_ATPase"/>
</dbReference>
<dbReference type="InterPro" id="IPR003959">
    <property type="entry name" value="ATPase_AAA_core"/>
</dbReference>
<dbReference type="InterPro" id="IPR027417">
    <property type="entry name" value="P-loop_NTPase"/>
</dbReference>
<dbReference type="InterPro" id="IPR008543">
    <property type="entry name" value="Uncharacterised_Ycf2"/>
</dbReference>
<dbReference type="InterPro" id="IPR056777">
    <property type="entry name" value="Ycf2_N"/>
</dbReference>
<dbReference type="PANTHER" id="PTHR33078:SF51">
    <property type="entry name" value="PROTEIN TIC 214"/>
    <property type="match status" value="1"/>
</dbReference>
<dbReference type="PANTHER" id="PTHR33078">
    <property type="entry name" value="PROTEIN YCF2-RELATED"/>
    <property type="match status" value="1"/>
</dbReference>
<dbReference type="Pfam" id="PF00004">
    <property type="entry name" value="AAA"/>
    <property type="match status" value="1"/>
</dbReference>
<dbReference type="Pfam" id="PF05695">
    <property type="entry name" value="Ycf2"/>
    <property type="match status" value="2"/>
</dbReference>
<dbReference type="SMART" id="SM00382">
    <property type="entry name" value="AAA"/>
    <property type="match status" value="1"/>
</dbReference>
<dbReference type="SUPFAM" id="SSF52540">
    <property type="entry name" value="P-loop containing nucleoside triphosphate hydrolases"/>
    <property type="match status" value="1"/>
</dbReference>
<reference key="1">
    <citation type="submission" date="2004-08" db="EMBL/GenBank/DDBJ databases">
        <title>A partial chloroplast genome of Silene latifolia.</title>
        <authorList>
            <person name="Kejnovsky E."/>
            <person name="Kubat Z."/>
            <person name="Hobza R."/>
            <person name="Lengerova M."/>
            <person name="Sato S."/>
            <person name="Tabata S."/>
            <person name="Fukui K."/>
            <person name="Matsunaga S."/>
            <person name="Vyskot B."/>
        </authorList>
    </citation>
    <scope>NUCLEOTIDE SEQUENCE [GENOMIC DNA]</scope>
</reference>
<protein>
    <recommendedName>
        <fullName evidence="1">Protein Ycf2</fullName>
    </recommendedName>
</protein>
<accession>Q589A6</accession>